<accession>A9KJ27</accession>
<comment type="function">
    <text evidence="1">Allows the formation of correctly charged Asn-tRNA(Asn) or Gln-tRNA(Gln) through the transamidation of misacylated Asp-tRNA(Asn) or Glu-tRNA(Gln) in organisms which lack either or both of asparaginyl-tRNA or glutaminyl-tRNA synthetases. The reaction takes place in the presence of glutamine and ATP through an activated phospho-Asp-tRNA(Asn) or phospho-Glu-tRNA(Gln).</text>
</comment>
<comment type="catalytic activity">
    <reaction evidence="1">
        <text>L-glutamyl-tRNA(Gln) + L-glutamine + ATP + H2O = L-glutaminyl-tRNA(Gln) + L-glutamate + ADP + phosphate + H(+)</text>
        <dbReference type="Rhea" id="RHEA:17521"/>
        <dbReference type="Rhea" id="RHEA-COMP:9681"/>
        <dbReference type="Rhea" id="RHEA-COMP:9684"/>
        <dbReference type="ChEBI" id="CHEBI:15377"/>
        <dbReference type="ChEBI" id="CHEBI:15378"/>
        <dbReference type="ChEBI" id="CHEBI:29985"/>
        <dbReference type="ChEBI" id="CHEBI:30616"/>
        <dbReference type="ChEBI" id="CHEBI:43474"/>
        <dbReference type="ChEBI" id="CHEBI:58359"/>
        <dbReference type="ChEBI" id="CHEBI:78520"/>
        <dbReference type="ChEBI" id="CHEBI:78521"/>
        <dbReference type="ChEBI" id="CHEBI:456216"/>
    </reaction>
</comment>
<comment type="catalytic activity">
    <reaction evidence="1">
        <text>L-aspartyl-tRNA(Asn) + L-glutamine + ATP + H2O = L-asparaginyl-tRNA(Asn) + L-glutamate + ADP + phosphate + 2 H(+)</text>
        <dbReference type="Rhea" id="RHEA:14513"/>
        <dbReference type="Rhea" id="RHEA-COMP:9674"/>
        <dbReference type="Rhea" id="RHEA-COMP:9677"/>
        <dbReference type="ChEBI" id="CHEBI:15377"/>
        <dbReference type="ChEBI" id="CHEBI:15378"/>
        <dbReference type="ChEBI" id="CHEBI:29985"/>
        <dbReference type="ChEBI" id="CHEBI:30616"/>
        <dbReference type="ChEBI" id="CHEBI:43474"/>
        <dbReference type="ChEBI" id="CHEBI:58359"/>
        <dbReference type="ChEBI" id="CHEBI:78515"/>
        <dbReference type="ChEBI" id="CHEBI:78516"/>
        <dbReference type="ChEBI" id="CHEBI:456216"/>
    </reaction>
</comment>
<comment type="subunit">
    <text evidence="1">Heterotrimer of A, B and C subunits.</text>
</comment>
<comment type="similarity">
    <text evidence="1">Belongs to the GatB/GatE family. GatB subfamily.</text>
</comment>
<organism>
    <name type="scientific">Lachnoclostridium phytofermentans (strain ATCC 700394 / DSM 18823 / ISDg)</name>
    <name type="common">Clostridium phytofermentans</name>
    <dbReference type="NCBI Taxonomy" id="357809"/>
    <lineage>
        <taxon>Bacteria</taxon>
        <taxon>Bacillati</taxon>
        <taxon>Bacillota</taxon>
        <taxon>Clostridia</taxon>
        <taxon>Lachnospirales</taxon>
        <taxon>Lachnospiraceae</taxon>
    </lineage>
</organism>
<protein>
    <recommendedName>
        <fullName evidence="1">Aspartyl/glutamyl-tRNA(Asn/Gln) amidotransferase subunit B</fullName>
        <shortName evidence="1">Asp/Glu-ADT subunit B</shortName>
        <ecNumber evidence="1">6.3.5.-</ecNumber>
    </recommendedName>
</protein>
<evidence type="ECO:0000255" key="1">
    <source>
        <dbReference type="HAMAP-Rule" id="MF_00121"/>
    </source>
</evidence>
<name>GATB_LACP7</name>
<sequence length="478" mass="54085">MKVYETVIGLEVHVELATKSKIFCGCTTQFGGEVNAHCCPICMGMPGTLPVLNKKVVEFAIAAGLAMNCDITKNCKFDRKNYFYPDLPKAYQVSQLYLPICRNGSIEIEVDGIKKSIGIHEIHMEEDAGKLVHDPWEDCTLVDYNRCGVPLIEIVSEPDMRSAEEVIAYLEKLKLILQYLGVSDCKMQEGSLRADINLSIREVGEPEFGTRTEMKNMNSFKAIARAIEGERKRQIELLEDGKKVIQETRRWDDNKDTSFAMRSKEDAQDYRYFPEPDLVPMEISEEWLTEIKGREPELRDAKMLRYVKEYEIPEYDAGIITGSKNLADIFEATVSLCNKPKEVSNWLMVETMRLLKESEQDAEELKLSPANFASLIELIDAGKINRTIAKEVFEQIFKANVDPNAYIEEHGLGMVSDDGVVRSTIENILKENVQSVSDYKNGKDKAFGFLVGQTMKAMRGKANPSVINEILRELLSKA</sequence>
<keyword id="KW-0067">ATP-binding</keyword>
<keyword id="KW-0436">Ligase</keyword>
<keyword id="KW-0547">Nucleotide-binding</keyword>
<keyword id="KW-0648">Protein biosynthesis</keyword>
<keyword id="KW-1185">Reference proteome</keyword>
<dbReference type="EC" id="6.3.5.-" evidence="1"/>
<dbReference type="EMBL" id="CP000885">
    <property type="protein sequence ID" value="ABX41026.1"/>
    <property type="molecule type" value="Genomic_DNA"/>
</dbReference>
<dbReference type="RefSeq" id="WP_012198670.1">
    <property type="nucleotide sequence ID" value="NC_010001.1"/>
</dbReference>
<dbReference type="SMR" id="A9KJ27"/>
<dbReference type="STRING" id="357809.Cphy_0639"/>
<dbReference type="KEGG" id="cpy:Cphy_0639"/>
<dbReference type="eggNOG" id="COG0064">
    <property type="taxonomic scope" value="Bacteria"/>
</dbReference>
<dbReference type="HOGENOM" id="CLU_019240_0_0_9"/>
<dbReference type="OrthoDB" id="9804078at2"/>
<dbReference type="Proteomes" id="UP000000370">
    <property type="component" value="Chromosome"/>
</dbReference>
<dbReference type="GO" id="GO:0050566">
    <property type="term" value="F:asparaginyl-tRNA synthase (glutamine-hydrolyzing) activity"/>
    <property type="evidence" value="ECO:0007669"/>
    <property type="project" value="RHEA"/>
</dbReference>
<dbReference type="GO" id="GO:0005524">
    <property type="term" value="F:ATP binding"/>
    <property type="evidence" value="ECO:0007669"/>
    <property type="project" value="UniProtKB-KW"/>
</dbReference>
<dbReference type="GO" id="GO:0050567">
    <property type="term" value="F:glutaminyl-tRNA synthase (glutamine-hydrolyzing) activity"/>
    <property type="evidence" value="ECO:0007669"/>
    <property type="project" value="UniProtKB-UniRule"/>
</dbReference>
<dbReference type="GO" id="GO:0070681">
    <property type="term" value="P:glutaminyl-tRNAGln biosynthesis via transamidation"/>
    <property type="evidence" value="ECO:0007669"/>
    <property type="project" value="TreeGrafter"/>
</dbReference>
<dbReference type="GO" id="GO:0006412">
    <property type="term" value="P:translation"/>
    <property type="evidence" value="ECO:0007669"/>
    <property type="project" value="UniProtKB-UniRule"/>
</dbReference>
<dbReference type="FunFam" id="1.10.10.410:FF:000001">
    <property type="entry name" value="Aspartyl/glutamyl-tRNA(Asn/Gln) amidotransferase subunit B"/>
    <property type="match status" value="1"/>
</dbReference>
<dbReference type="Gene3D" id="1.10.10.410">
    <property type="match status" value="1"/>
</dbReference>
<dbReference type="Gene3D" id="1.10.150.380">
    <property type="entry name" value="GatB domain, N-terminal subdomain"/>
    <property type="match status" value="1"/>
</dbReference>
<dbReference type="HAMAP" id="MF_00121">
    <property type="entry name" value="GatB"/>
    <property type="match status" value="1"/>
</dbReference>
<dbReference type="InterPro" id="IPR017959">
    <property type="entry name" value="Asn/Gln-tRNA_amidoTrfase_suB/E"/>
</dbReference>
<dbReference type="InterPro" id="IPR006075">
    <property type="entry name" value="Asn/Gln-tRNA_Trfase_suB/E_cat"/>
</dbReference>
<dbReference type="InterPro" id="IPR018027">
    <property type="entry name" value="Asn/Gln_amidotransferase"/>
</dbReference>
<dbReference type="InterPro" id="IPR003789">
    <property type="entry name" value="Asn/Gln_tRNA_amidoTrase-B-like"/>
</dbReference>
<dbReference type="InterPro" id="IPR004413">
    <property type="entry name" value="GatB"/>
</dbReference>
<dbReference type="InterPro" id="IPR042114">
    <property type="entry name" value="GatB_C_1"/>
</dbReference>
<dbReference type="InterPro" id="IPR023168">
    <property type="entry name" value="GatB_Yqey_C_2"/>
</dbReference>
<dbReference type="InterPro" id="IPR017958">
    <property type="entry name" value="Gln-tRNA_amidoTrfase_suB_CS"/>
</dbReference>
<dbReference type="InterPro" id="IPR014746">
    <property type="entry name" value="Gln_synth/guanido_kin_cat_dom"/>
</dbReference>
<dbReference type="NCBIfam" id="TIGR00133">
    <property type="entry name" value="gatB"/>
    <property type="match status" value="1"/>
</dbReference>
<dbReference type="NCBIfam" id="NF004012">
    <property type="entry name" value="PRK05477.1-2"/>
    <property type="match status" value="1"/>
</dbReference>
<dbReference type="NCBIfam" id="NF004014">
    <property type="entry name" value="PRK05477.1-4"/>
    <property type="match status" value="1"/>
</dbReference>
<dbReference type="PANTHER" id="PTHR11659">
    <property type="entry name" value="GLUTAMYL-TRNA GLN AMIDOTRANSFERASE SUBUNIT B MITOCHONDRIAL AND PROKARYOTIC PET112-RELATED"/>
    <property type="match status" value="1"/>
</dbReference>
<dbReference type="PANTHER" id="PTHR11659:SF0">
    <property type="entry name" value="GLUTAMYL-TRNA(GLN) AMIDOTRANSFERASE SUBUNIT B, MITOCHONDRIAL"/>
    <property type="match status" value="1"/>
</dbReference>
<dbReference type="Pfam" id="PF02934">
    <property type="entry name" value="GatB_N"/>
    <property type="match status" value="1"/>
</dbReference>
<dbReference type="Pfam" id="PF02637">
    <property type="entry name" value="GatB_Yqey"/>
    <property type="match status" value="1"/>
</dbReference>
<dbReference type="SMART" id="SM00845">
    <property type="entry name" value="GatB_Yqey"/>
    <property type="match status" value="1"/>
</dbReference>
<dbReference type="SUPFAM" id="SSF89095">
    <property type="entry name" value="GatB/YqeY motif"/>
    <property type="match status" value="1"/>
</dbReference>
<dbReference type="SUPFAM" id="SSF55931">
    <property type="entry name" value="Glutamine synthetase/guanido kinase"/>
    <property type="match status" value="1"/>
</dbReference>
<dbReference type="PROSITE" id="PS01234">
    <property type="entry name" value="GATB"/>
    <property type="match status" value="1"/>
</dbReference>
<reference key="1">
    <citation type="submission" date="2007-11" db="EMBL/GenBank/DDBJ databases">
        <title>Complete genome sequence of Clostridium phytofermentans ISDg.</title>
        <authorList>
            <person name="Leschine S.B."/>
            <person name="Warnick T.A."/>
            <person name="Blanchard J.L."/>
            <person name="Schnell D.J."/>
            <person name="Petit E.L."/>
            <person name="LaTouf W.G."/>
            <person name="Copeland A."/>
            <person name="Lucas S."/>
            <person name="Lapidus A."/>
            <person name="Barry K."/>
            <person name="Glavina del Rio T."/>
            <person name="Dalin E."/>
            <person name="Tice H."/>
            <person name="Pitluck S."/>
            <person name="Kiss H."/>
            <person name="Brettin T."/>
            <person name="Bruce D."/>
            <person name="Detter J.C."/>
            <person name="Han C."/>
            <person name="Kuske C."/>
            <person name="Schmutz J."/>
            <person name="Larimer F."/>
            <person name="Land M."/>
            <person name="Hauser L."/>
            <person name="Kyrpides N."/>
            <person name="Kim E.A."/>
            <person name="Richardson P."/>
        </authorList>
    </citation>
    <scope>NUCLEOTIDE SEQUENCE [LARGE SCALE GENOMIC DNA]</scope>
    <source>
        <strain>ATCC 700394 / DSM 18823 / ISDg</strain>
    </source>
</reference>
<feature type="chain" id="PRO_1000076156" description="Aspartyl/glutamyl-tRNA(Asn/Gln) amidotransferase subunit B">
    <location>
        <begin position="1"/>
        <end position="478"/>
    </location>
</feature>
<proteinExistence type="inferred from homology"/>
<gene>
    <name evidence="1" type="primary">gatB</name>
    <name type="ordered locus">Cphy_0639</name>
</gene>